<comment type="function">
    <text evidence="4">Acyltransferase involved in fatty acid phytyl ester synthesis in chloroplasts, a process required for the maintenance of the photosynthetic membrane integrity during abiotic stress and senescence (PubMed:22623494). Exhibits phytyl ester synthesis and diacylglycerol acyltransferase activities with broad substrate specificities, and can employ acyl-CoAs, acyl carrier proteins, and galactolipids as acyl donors (PubMed:22623494).</text>
</comment>
<comment type="catalytic activity">
    <reaction evidence="4">
        <text>a 1,2-diacyl-3-O-(beta-D-galactosyl)-sn-glycerol + a 1,2-diacylglycerol = an acyl-3-O-(beta-D-galactosyl)-sn-glycerol + a triacylglycerol</text>
        <dbReference type="Rhea" id="RHEA:68116"/>
        <dbReference type="ChEBI" id="CHEBI:17615"/>
        <dbReference type="ChEBI" id="CHEBI:17855"/>
        <dbReference type="ChEBI" id="CHEBI:49172"/>
        <dbReference type="ChEBI" id="CHEBI:141434"/>
    </reaction>
    <physiologicalReaction direction="left-to-right" evidence="4">
        <dbReference type="Rhea" id="RHEA:68117"/>
    </physiologicalReaction>
</comment>
<comment type="catalytic activity">
    <reaction evidence="4">
        <text>a 1,2-diacylglycerol + a fatty acyl-CoA = a triacylglycerol + CoA</text>
        <dbReference type="Rhea" id="RHEA:68120"/>
        <dbReference type="ChEBI" id="CHEBI:17855"/>
        <dbReference type="ChEBI" id="CHEBI:49172"/>
        <dbReference type="ChEBI" id="CHEBI:57287"/>
        <dbReference type="ChEBI" id="CHEBI:77636"/>
    </reaction>
    <physiologicalReaction direction="left-to-right" evidence="4">
        <dbReference type="Rhea" id="RHEA:68121"/>
    </physiologicalReaction>
</comment>
<comment type="catalytic activity">
    <reaction evidence="4">
        <text>a fatty acyl-[ACP] + a 1,2-diacylglycerol = a triacylglycerol + holo-[ACP]</text>
        <dbReference type="Rhea" id="RHEA:68124"/>
        <dbReference type="Rhea" id="RHEA-COMP:9685"/>
        <dbReference type="Rhea" id="RHEA-COMP:14125"/>
        <dbReference type="ChEBI" id="CHEBI:17855"/>
        <dbReference type="ChEBI" id="CHEBI:49172"/>
        <dbReference type="ChEBI" id="CHEBI:64479"/>
        <dbReference type="ChEBI" id="CHEBI:138651"/>
    </reaction>
    <physiologicalReaction direction="left-to-right" evidence="4">
        <dbReference type="Rhea" id="RHEA:68125"/>
    </physiologicalReaction>
</comment>
<comment type="catalytic activity">
    <reaction evidence="4">
        <text>phytol + a fatty acyl-CoA = a fatty acid phytyl ester + CoA</text>
        <dbReference type="Rhea" id="RHEA:68128"/>
        <dbReference type="ChEBI" id="CHEBI:17327"/>
        <dbReference type="ChEBI" id="CHEBI:57287"/>
        <dbReference type="ChEBI" id="CHEBI:77636"/>
        <dbReference type="ChEBI" id="CHEBI:177021"/>
    </reaction>
    <physiologicalReaction direction="left-to-right" evidence="4">
        <dbReference type="Rhea" id="RHEA:68129"/>
    </physiologicalReaction>
</comment>
<comment type="catalytic activity">
    <reaction evidence="4">
        <text>phytol + tetradecanoyl-CoA = tetradecanoate phytyl ester + CoA</text>
        <dbReference type="Rhea" id="RHEA:68132"/>
        <dbReference type="ChEBI" id="CHEBI:17327"/>
        <dbReference type="ChEBI" id="CHEBI:57287"/>
        <dbReference type="ChEBI" id="CHEBI:57385"/>
        <dbReference type="ChEBI" id="CHEBI:177026"/>
    </reaction>
    <physiologicalReaction direction="left-to-right" evidence="4">
        <dbReference type="Rhea" id="RHEA:68133"/>
    </physiologicalReaction>
</comment>
<comment type="catalytic activity">
    <reaction evidence="4">
        <text>a 1,3-diacylglycerol + a fatty acyl-CoA = a triacylglycerol + CoA</text>
        <dbReference type="Rhea" id="RHEA:68152"/>
        <dbReference type="ChEBI" id="CHEBI:17855"/>
        <dbReference type="ChEBI" id="CHEBI:47777"/>
        <dbReference type="ChEBI" id="CHEBI:57287"/>
        <dbReference type="ChEBI" id="CHEBI:77636"/>
    </reaction>
    <physiologicalReaction direction="left-to-right" evidence="4">
        <dbReference type="Rhea" id="RHEA:68153"/>
    </physiologicalReaction>
</comment>
<comment type="catalytic activity">
    <reaction evidence="4">
        <text>1,2-dihexanoylglycerol + tetradecanoyl-CoA = 1,2-dihexanoyl-3-tetradecanoylglycerol + CoA</text>
        <dbReference type="Rhea" id="RHEA:68196"/>
        <dbReference type="ChEBI" id="CHEBI:57287"/>
        <dbReference type="ChEBI" id="CHEBI:57385"/>
        <dbReference type="ChEBI" id="CHEBI:177077"/>
        <dbReference type="ChEBI" id="CHEBI:177078"/>
    </reaction>
    <physiologicalReaction direction="left-to-right" evidence="4">
        <dbReference type="Rhea" id="RHEA:68197"/>
    </physiologicalReaction>
</comment>
<comment type="catalytic activity">
    <reaction evidence="4">
        <text>1,2-dihexanoylglycerol + hexadecanoyl-CoA = 1,2-dihexanoyl-3-hexadecanoylglycerol + CoA</text>
        <dbReference type="Rhea" id="RHEA:68200"/>
        <dbReference type="ChEBI" id="CHEBI:57287"/>
        <dbReference type="ChEBI" id="CHEBI:57379"/>
        <dbReference type="ChEBI" id="CHEBI:177077"/>
        <dbReference type="ChEBI" id="CHEBI:177079"/>
    </reaction>
    <physiologicalReaction direction="left-to-right" evidence="4">
        <dbReference type="Rhea" id="RHEA:68201"/>
    </physiologicalReaction>
</comment>
<comment type="catalytic activity">
    <reaction evidence="4">
        <text>1,2-dihexanoylglycerol + octadecanoyl-CoA = 1,2-dihexanoyl-3-octadecanoylglycerol + CoA</text>
        <dbReference type="Rhea" id="RHEA:68204"/>
        <dbReference type="ChEBI" id="CHEBI:57287"/>
        <dbReference type="ChEBI" id="CHEBI:57394"/>
        <dbReference type="ChEBI" id="CHEBI:177077"/>
        <dbReference type="ChEBI" id="CHEBI:177080"/>
    </reaction>
    <physiologicalReaction direction="left-to-right" evidence="4">
        <dbReference type="Rhea" id="RHEA:68205"/>
    </physiologicalReaction>
</comment>
<comment type="catalytic activity">
    <reaction evidence="4">
        <text>(7Z,10Z,13Z)-hexadecatrienoyl-CoA + 1,2-dihexanoylglycerol = 1,2-dihexanoyl-3-(7Z,10Z,13Z-hexadecatrienoyl)-glycerol + CoA</text>
        <dbReference type="Rhea" id="RHEA:68208"/>
        <dbReference type="ChEBI" id="CHEBI:57287"/>
        <dbReference type="ChEBI" id="CHEBI:177077"/>
        <dbReference type="ChEBI" id="CHEBI:177083"/>
        <dbReference type="ChEBI" id="CHEBI:177091"/>
    </reaction>
    <physiologicalReaction direction="left-to-right" evidence="4">
        <dbReference type="Rhea" id="RHEA:68209"/>
    </physiologicalReaction>
</comment>
<comment type="catalytic activity">
    <reaction evidence="4">
        <text>1,2-dihexanoylglycerol + (9Z)-octadecenoyl-CoA = 1,2-dihexanoyl-3-(9Z-octadecenoyl)-glycerol + CoA</text>
        <dbReference type="Rhea" id="RHEA:68212"/>
        <dbReference type="ChEBI" id="CHEBI:57287"/>
        <dbReference type="ChEBI" id="CHEBI:57387"/>
        <dbReference type="ChEBI" id="CHEBI:177077"/>
        <dbReference type="ChEBI" id="CHEBI:177087"/>
    </reaction>
    <physiologicalReaction direction="left-to-right" evidence="4">
        <dbReference type="Rhea" id="RHEA:68213"/>
    </physiologicalReaction>
</comment>
<comment type="catalytic activity">
    <reaction evidence="4">
        <text>1,2-dihexanoylglycerol + (9Z,12Z,15Z)-octadecatrienoyl-CoA = 1,2-dihexanoyl-3-(9Z,12Z,15Z-octadecatrienoyl)-glycerol + CoA</text>
        <dbReference type="Rhea" id="RHEA:68216"/>
        <dbReference type="ChEBI" id="CHEBI:57287"/>
        <dbReference type="ChEBI" id="CHEBI:74034"/>
        <dbReference type="ChEBI" id="CHEBI:177077"/>
        <dbReference type="ChEBI" id="CHEBI:177088"/>
    </reaction>
    <physiologicalReaction direction="left-to-right" evidence="4">
        <dbReference type="Rhea" id="RHEA:68217"/>
    </physiologicalReaction>
</comment>
<comment type="catalytic activity">
    <reaction evidence="4">
        <text>phytol + decanoyl-CoA = decanoate phytyl ester + CoA</text>
        <dbReference type="Rhea" id="RHEA:68192"/>
        <dbReference type="ChEBI" id="CHEBI:17327"/>
        <dbReference type="ChEBI" id="CHEBI:57287"/>
        <dbReference type="ChEBI" id="CHEBI:61430"/>
        <dbReference type="ChEBI" id="CHEBI:177028"/>
    </reaction>
    <physiologicalReaction direction="left-to-right" evidence="4">
        <dbReference type="Rhea" id="RHEA:68193"/>
    </physiologicalReaction>
</comment>
<comment type="catalytic activity">
    <reaction evidence="4">
        <text>(7Z,10Z,13Z)-hexadecatrienoyl-CoA + phytol = (7Z,10Z,13Z)-hexadecatrienoate phytyl ester + CoA</text>
        <dbReference type="Rhea" id="RHEA:68220"/>
        <dbReference type="ChEBI" id="CHEBI:17327"/>
        <dbReference type="ChEBI" id="CHEBI:57287"/>
        <dbReference type="ChEBI" id="CHEBI:177029"/>
        <dbReference type="ChEBI" id="CHEBI:177091"/>
    </reaction>
    <physiologicalReaction direction="left-to-right" evidence="4">
        <dbReference type="Rhea" id="RHEA:68221"/>
    </physiologicalReaction>
</comment>
<comment type="catalytic activity">
    <reaction evidence="4">
        <text>phytol + dodecanoyl-CoA = dodecanoate phytyl ester + CoA</text>
        <dbReference type="Rhea" id="RHEA:68188"/>
        <dbReference type="ChEBI" id="CHEBI:17327"/>
        <dbReference type="ChEBI" id="CHEBI:57287"/>
        <dbReference type="ChEBI" id="CHEBI:57375"/>
        <dbReference type="ChEBI" id="CHEBI:177027"/>
    </reaction>
    <physiologicalReaction direction="left-to-right" evidence="4">
        <dbReference type="Rhea" id="RHEA:68189"/>
    </physiologicalReaction>
</comment>
<comment type="subunit">
    <text evidence="5">Interacts with PGM48.</text>
</comment>
<comment type="subcellular location">
    <subcellularLocation>
        <location evidence="2 3 4">Plastid</location>
        <location evidence="2 3 4">Chloroplast</location>
        <location evidence="2 3 4">Plastoglobule</location>
    </subcellularLocation>
</comment>
<comment type="tissue specificity">
    <text evidence="6">Mostly expressed in flowers (e.g. sepals, petals and stamen).</text>
</comment>
<comment type="developmental stage">
    <text evidence="4 6">Highly expressed during senescence.</text>
</comment>
<comment type="induction">
    <text evidence="4 7">Accumulates upon nitrogen deprivation (PubMed:22623494). Triggered by NAC072/RD26 during senescence (PubMed:29659022).</text>
</comment>
<comment type="disruption phenotype">
    <text evidence="4">Plants lacking both PES1 and PES2 grow normally but show reduced phytyl ester and triacylglycerol accumulation.</text>
</comment>
<comment type="similarity">
    <text evidence="9">Belongs to the diacylglycerol acyltransferase family.</text>
</comment>
<keyword id="KW-0012">Acyltransferase</keyword>
<keyword id="KW-0150">Chloroplast</keyword>
<keyword id="KW-0934">Plastid</keyword>
<keyword id="KW-1185">Reference proteome</keyword>
<keyword id="KW-0346">Stress response</keyword>
<keyword id="KW-0808">Transferase</keyword>
<keyword id="KW-0809">Transit peptide</keyword>
<name>PES1_ARATH</name>
<protein>
    <recommendedName>
        <fullName evidence="8">Phytyl ester synthase 1, chloroplastic</fullName>
        <ecNumber evidence="4">2.3.1.-</ecNumber>
    </recommendedName>
</protein>
<reference key="1">
    <citation type="journal article" date="2000" name="Nature">
        <title>Sequence and analysis of chromosome 1 of the plant Arabidopsis thaliana.</title>
        <authorList>
            <person name="Theologis A."/>
            <person name="Ecker J.R."/>
            <person name="Palm C.J."/>
            <person name="Federspiel N.A."/>
            <person name="Kaul S."/>
            <person name="White O."/>
            <person name="Alonso J."/>
            <person name="Altafi H."/>
            <person name="Araujo R."/>
            <person name="Bowman C.L."/>
            <person name="Brooks S.Y."/>
            <person name="Buehler E."/>
            <person name="Chan A."/>
            <person name="Chao Q."/>
            <person name="Chen H."/>
            <person name="Cheuk R.F."/>
            <person name="Chin C.W."/>
            <person name="Chung M.K."/>
            <person name="Conn L."/>
            <person name="Conway A.B."/>
            <person name="Conway A.R."/>
            <person name="Creasy T.H."/>
            <person name="Dewar K."/>
            <person name="Dunn P."/>
            <person name="Etgu P."/>
            <person name="Feldblyum T.V."/>
            <person name="Feng J.-D."/>
            <person name="Fong B."/>
            <person name="Fujii C.Y."/>
            <person name="Gill J.E."/>
            <person name="Goldsmith A.D."/>
            <person name="Haas B."/>
            <person name="Hansen N.F."/>
            <person name="Hughes B."/>
            <person name="Huizar L."/>
            <person name="Hunter J.L."/>
            <person name="Jenkins J."/>
            <person name="Johnson-Hopson C."/>
            <person name="Khan S."/>
            <person name="Khaykin E."/>
            <person name="Kim C.J."/>
            <person name="Koo H.L."/>
            <person name="Kremenetskaia I."/>
            <person name="Kurtz D.B."/>
            <person name="Kwan A."/>
            <person name="Lam B."/>
            <person name="Langin-Hooper S."/>
            <person name="Lee A."/>
            <person name="Lee J.M."/>
            <person name="Lenz C.A."/>
            <person name="Li J.H."/>
            <person name="Li Y.-P."/>
            <person name="Lin X."/>
            <person name="Liu S.X."/>
            <person name="Liu Z.A."/>
            <person name="Luros J.S."/>
            <person name="Maiti R."/>
            <person name="Marziali A."/>
            <person name="Militscher J."/>
            <person name="Miranda M."/>
            <person name="Nguyen M."/>
            <person name="Nierman W.C."/>
            <person name="Osborne B.I."/>
            <person name="Pai G."/>
            <person name="Peterson J."/>
            <person name="Pham P.K."/>
            <person name="Rizzo M."/>
            <person name="Rooney T."/>
            <person name="Rowley D."/>
            <person name="Sakano H."/>
            <person name="Salzberg S.L."/>
            <person name="Schwartz J.R."/>
            <person name="Shinn P."/>
            <person name="Southwick A.M."/>
            <person name="Sun H."/>
            <person name="Tallon L.J."/>
            <person name="Tambunga G."/>
            <person name="Toriumi M.J."/>
            <person name="Town C.D."/>
            <person name="Utterback T."/>
            <person name="Van Aken S."/>
            <person name="Vaysberg M."/>
            <person name="Vysotskaia V.S."/>
            <person name="Walker M."/>
            <person name="Wu D."/>
            <person name="Yu G."/>
            <person name="Fraser C.M."/>
            <person name="Venter J.C."/>
            <person name="Davis R.W."/>
        </authorList>
    </citation>
    <scope>NUCLEOTIDE SEQUENCE [LARGE SCALE GENOMIC DNA]</scope>
    <source>
        <strain>cv. Columbia</strain>
    </source>
</reference>
<reference key="2">
    <citation type="journal article" date="2017" name="Plant J.">
        <title>Araport11: a complete reannotation of the Arabidopsis thaliana reference genome.</title>
        <authorList>
            <person name="Cheng C.Y."/>
            <person name="Krishnakumar V."/>
            <person name="Chan A.P."/>
            <person name="Thibaud-Nissen F."/>
            <person name="Schobel S."/>
            <person name="Town C.D."/>
        </authorList>
    </citation>
    <scope>GENOME REANNOTATION</scope>
    <source>
        <strain>cv. Columbia</strain>
    </source>
</reference>
<reference key="3">
    <citation type="journal article" date="2003" name="Science">
        <title>Empirical analysis of transcriptional activity in the Arabidopsis genome.</title>
        <authorList>
            <person name="Yamada K."/>
            <person name="Lim J."/>
            <person name="Dale J.M."/>
            <person name="Chen H."/>
            <person name="Shinn P."/>
            <person name="Palm C.J."/>
            <person name="Southwick A.M."/>
            <person name="Wu H.C."/>
            <person name="Kim C.J."/>
            <person name="Nguyen M."/>
            <person name="Pham P.K."/>
            <person name="Cheuk R.F."/>
            <person name="Karlin-Newmann G."/>
            <person name="Liu S.X."/>
            <person name="Lam B."/>
            <person name="Sakano H."/>
            <person name="Wu T."/>
            <person name="Yu G."/>
            <person name="Miranda M."/>
            <person name="Quach H.L."/>
            <person name="Tripp M."/>
            <person name="Chang C.H."/>
            <person name="Lee J.M."/>
            <person name="Toriumi M.J."/>
            <person name="Chan M.M."/>
            <person name="Tang C.C."/>
            <person name="Onodera C.S."/>
            <person name="Deng J.M."/>
            <person name="Akiyama K."/>
            <person name="Ansari Y."/>
            <person name="Arakawa T."/>
            <person name="Banh J."/>
            <person name="Banno F."/>
            <person name="Bowser L."/>
            <person name="Brooks S.Y."/>
            <person name="Carninci P."/>
            <person name="Chao Q."/>
            <person name="Choy N."/>
            <person name="Enju A."/>
            <person name="Goldsmith A.D."/>
            <person name="Gurjal M."/>
            <person name="Hansen N.F."/>
            <person name="Hayashizaki Y."/>
            <person name="Johnson-Hopson C."/>
            <person name="Hsuan V.W."/>
            <person name="Iida K."/>
            <person name="Karnes M."/>
            <person name="Khan S."/>
            <person name="Koesema E."/>
            <person name="Ishida J."/>
            <person name="Jiang P.X."/>
            <person name="Jones T."/>
            <person name="Kawai J."/>
            <person name="Kamiya A."/>
            <person name="Meyers C."/>
            <person name="Nakajima M."/>
            <person name="Narusaka M."/>
            <person name="Seki M."/>
            <person name="Sakurai T."/>
            <person name="Satou M."/>
            <person name="Tamse R."/>
            <person name="Vaysberg M."/>
            <person name="Wallender E.K."/>
            <person name="Wong C."/>
            <person name="Yamamura Y."/>
            <person name="Yuan S."/>
            <person name="Shinozaki K."/>
            <person name="Davis R.W."/>
            <person name="Theologis A."/>
            <person name="Ecker J.R."/>
        </authorList>
    </citation>
    <scope>NUCLEOTIDE SEQUENCE [LARGE SCALE MRNA]</scope>
    <source>
        <strain>cv. Columbia</strain>
    </source>
</reference>
<reference key="4">
    <citation type="journal article" date="2002" name="Science">
        <title>Functional annotation of a full-length Arabidopsis cDNA collection.</title>
        <authorList>
            <person name="Seki M."/>
            <person name="Narusaka M."/>
            <person name="Kamiya A."/>
            <person name="Ishida J."/>
            <person name="Satou M."/>
            <person name="Sakurai T."/>
            <person name="Nakajima M."/>
            <person name="Enju A."/>
            <person name="Akiyama K."/>
            <person name="Oono Y."/>
            <person name="Muramatsu M."/>
            <person name="Hayashizaki Y."/>
            <person name="Kawai J."/>
            <person name="Carninci P."/>
            <person name="Itoh M."/>
            <person name="Ishii Y."/>
            <person name="Arakawa T."/>
            <person name="Shibata K."/>
            <person name="Shinagawa A."/>
            <person name="Shinozaki K."/>
        </authorList>
    </citation>
    <scope>NUCLEOTIDE SEQUENCE [LARGE SCALE MRNA]</scope>
    <source>
        <strain>cv. Columbia</strain>
    </source>
</reference>
<reference key="5">
    <citation type="submission" date="2002-03" db="EMBL/GenBank/DDBJ databases">
        <title>Full-length cDNA from Arabidopsis thaliana.</title>
        <authorList>
            <person name="Brover V.V."/>
            <person name="Troukhan M.E."/>
            <person name="Alexandrov N.A."/>
            <person name="Lu Y.-P."/>
            <person name="Flavell R.B."/>
            <person name="Feldmann K.A."/>
        </authorList>
    </citation>
    <scope>NUCLEOTIDE SEQUENCE [LARGE SCALE MRNA]</scope>
</reference>
<reference key="6">
    <citation type="journal article" date="2006" name="Plant Physiol.">
        <title>Protein profiling of plastoglobules in chloroplasts and chromoplasts. A surprising site for differential accumulation of metabolic enzymes.</title>
        <authorList>
            <person name="Ytterberg A.J."/>
            <person name="Peltier J.-B."/>
            <person name="van Wijk K.J."/>
        </authorList>
    </citation>
    <scope>IDENTIFICATION BY MASS SPECTROMETRY</scope>
    <scope>SUBCELLULAR LOCATION [LARGE SCALE ANALYSIS]</scope>
    <source>
        <strain>cv. Columbia</strain>
    </source>
</reference>
<reference key="7">
    <citation type="journal article" date="2012" name="Plant Cell">
        <title>Fatty acid phytyl ester synthesis in chloroplasts of Arabidopsis.</title>
        <authorList>
            <person name="Lippold F."/>
            <person name="vom Dorp K."/>
            <person name="Abraham M."/>
            <person name="Hoelzl G."/>
            <person name="Wewer V."/>
            <person name="Yilmaz J.L."/>
            <person name="Lager I."/>
            <person name="Montandon C."/>
            <person name="Besagni C."/>
            <person name="Kessler F."/>
            <person name="Stymne S."/>
            <person name="Doermann P."/>
        </authorList>
    </citation>
    <scope>FUNCTION</scope>
    <scope>DISRUPTION PHENOTYPE</scope>
    <scope>DEVELOPMENTAL STAGE</scope>
    <scope>INDUCTION BY NITROGEN DEPRIVATION</scope>
    <scope>SUBCELLULAR LOCATION</scope>
    <scope>CATALYTIC ACTIVITY</scope>
</reference>
<reference key="8">
    <citation type="journal article" date="2012" name="Plant Physiol.">
        <title>The functional network of the Arabidopsis plastoglobule proteome based on quantitative proteomics and genome-wide coexpression analysis.</title>
        <authorList>
            <person name="Lundquist P.K."/>
            <person name="Poliakov A."/>
            <person name="Bhuiyan N.H."/>
            <person name="Zybailov B."/>
            <person name="Sun Q."/>
            <person name="van Wijk K.J."/>
        </authorList>
    </citation>
    <scope>IDENTIFICATION BY MASS SPECTROMETRY</scope>
    <scope>SUBCELLULAR LOCATION [LARGE SCALE ANALYSIS]</scope>
    <source>
        <strain>cv. Columbia</strain>
    </source>
</reference>
<reference key="9">
    <citation type="journal article" date="2016" name="Plant Cell">
        <title>The plastoglobule-localized metallopeptidase PGM48 is a positive regulator of senescence in Arabidopsis thaliana.</title>
        <authorList>
            <person name="Bhuiyan N.H."/>
            <person name="Friso G."/>
            <person name="Rowland E."/>
            <person name="Majsec K."/>
            <person name="van Wijk K.J."/>
        </authorList>
    </citation>
    <scope>INTERACTION WITH PGM48</scope>
</reference>
<reference key="10">
    <citation type="journal article" date="2017" name="Plant Signal. Behav.">
        <title>Functions and substrates of plastoglobule-localized metallopeptidase PGM48.</title>
        <authorList>
            <person name="Bhuiyan N.H."/>
            <person name="van Wijk K.J."/>
        </authorList>
    </citation>
    <scope>DEVELOPMENTAL STAGE</scope>
    <scope>TISSUE SPECIFICITY</scope>
</reference>
<reference key="11">
    <citation type="journal article" date="2018" name="New Phytol.">
        <title>Transcription factor RD26 is a key regulator of metabolic reprogramming during dark-induced senescence.</title>
        <authorList>
            <person name="Kamranfar I."/>
            <person name="Xue G.-P."/>
            <person name="Tohge T."/>
            <person name="Sedaghatmehr M."/>
            <person name="Fernie A.R."/>
            <person name="Balazadeh S."/>
            <person name="Mueller-Roeber B."/>
        </authorList>
    </citation>
    <scope>INDUCTION BY NAC072/RD26</scope>
    <source>
        <strain>cv. Columbia</strain>
    </source>
</reference>
<evidence type="ECO:0000255" key="1"/>
<evidence type="ECO:0000269" key="2">
    <source>
    </source>
</evidence>
<evidence type="ECO:0000269" key="3">
    <source>
    </source>
</evidence>
<evidence type="ECO:0000269" key="4">
    <source>
    </source>
</evidence>
<evidence type="ECO:0000269" key="5">
    <source>
    </source>
</evidence>
<evidence type="ECO:0000269" key="6">
    <source>
    </source>
</evidence>
<evidence type="ECO:0000269" key="7">
    <source>
    </source>
</evidence>
<evidence type="ECO:0000303" key="8">
    <source>
    </source>
</evidence>
<evidence type="ECO:0000305" key="9"/>
<evidence type="ECO:0000312" key="10">
    <source>
        <dbReference type="Araport" id="AT1G54570"/>
    </source>
</evidence>
<evidence type="ECO:0000312" key="11">
    <source>
        <dbReference type="EMBL" id="AAC64874.1"/>
    </source>
</evidence>
<feature type="transit peptide" description="Chloroplast" evidence="1">
    <location>
        <begin position="1"/>
        <end position="27"/>
    </location>
</feature>
<feature type="chain" id="PRO_0000286519" description="Phytyl ester synthase 1, chloroplastic">
    <location>
        <begin position="28"/>
        <end position="704"/>
    </location>
</feature>
<sequence length="704" mass="78204">MATCSSSLLVLPNLRLSSNQRRNFKVRAQISGENKKATSLEPVNNNGSVSLSTTVQNQKGANEVNGKGKSKRKIVSDEIELLWDDGYGSKSVKDYFAAAKEILKADGGPPRWFSPVDCGRPVEDAPTLLFLPGMDGTGMGLVPHHKALGKAFHVSCLHIPVLDRTPFEGLLKVVEDVLRQEQATRPNKPIYLVGDSFGGCLALAVAARNRSLDLVLILVNPATSFDRSPLQPLLPILEMVPEELHFTVPYALSFIMGDPIKMATLGIDNQLPTGVKIEKLRQRLTKTMLPLLSELGGIIPRETLLWKLKLLRSGCAYANSRIHAVQAEVLVLASGKDMMLPSQEEAKRLHGLLKNCSVRCFKDNGHTLLLEDSISLLTVIKGTGKYRRSWRYDLVSDFLPPSKGELAYALDEVLGFLRNAVGSVFFSTMEDGKIVKGLAGVPDKGPVLLVGYHMLMGLELGPMSEAFIKEKNILFRGMAHPVLYSDNDPAKAFDYGDWIKVFGAYPVTATNLFKLLDSKSHVLLFPGGAREALHNRGEQYKLIWPEQQEFVRMAARFGATIVPFGTVGEDDIAELVLDYNDLMKIPILNDYITEVTRDTKQFKLREESEGEVANQPLYLPGLIPKVPGRFYYLFGKPIETKGRPELVKDKEEANQVYLEVKAEVENSIAYLLKKREEDPYRSVLDRLNYSLTHTTATHVPSFEP</sequence>
<gene>
    <name evidence="8" type="primary">PES1</name>
    <name evidence="10" type="ordered locus">At1g54570</name>
    <name evidence="11" type="ORF">T22H22.2</name>
</gene>
<dbReference type="EC" id="2.3.1.-" evidence="4"/>
<dbReference type="EMBL" id="AC005388">
    <property type="protein sequence ID" value="AAC64874.1"/>
    <property type="molecule type" value="Genomic_DNA"/>
</dbReference>
<dbReference type="EMBL" id="CP002684">
    <property type="protein sequence ID" value="AEE33119.1"/>
    <property type="molecule type" value="Genomic_DNA"/>
</dbReference>
<dbReference type="EMBL" id="BT005958">
    <property type="protein sequence ID" value="AAO64893.1"/>
    <property type="molecule type" value="mRNA"/>
</dbReference>
<dbReference type="EMBL" id="AK118486">
    <property type="protein sequence ID" value="BAC43090.1"/>
    <property type="molecule type" value="mRNA"/>
</dbReference>
<dbReference type="EMBL" id="AY086491">
    <property type="protein sequence ID" value="AAM63493.1"/>
    <property type="molecule type" value="mRNA"/>
</dbReference>
<dbReference type="PIR" id="G96587">
    <property type="entry name" value="G96587"/>
</dbReference>
<dbReference type="RefSeq" id="NP_564662.1">
    <property type="nucleotide sequence ID" value="NM_104335.5"/>
</dbReference>
<dbReference type="SMR" id="Q9ZVN2"/>
<dbReference type="BioGRID" id="27124">
    <property type="interactions" value="3"/>
</dbReference>
<dbReference type="FunCoup" id="Q9ZVN2">
    <property type="interactions" value="73"/>
</dbReference>
<dbReference type="STRING" id="3702.Q9ZVN2"/>
<dbReference type="ESTHER" id="arath-Y1457">
    <property type="family name" value="AlphaBeta_hydrolase"/>
</dbReference>
<dbReference type="MetOSite" id="Q9ZVN2"/>
<dbReference type="PaxDb" id="3702-AT1G54570.1"/>
<dbReference type="ProteomicsDB" id="242418"/>
<dbReference type="EnsemblPlants" id="AT1G54570.1">
    <property type="protein sequence ID" value="AT1G54570.1"/>
    <property type="gene ID" value="AT1G54570"/>
</dbReference>
<dbReference type="GeneID" id="841899"/>
<dbReference type="Gramene" id="AT1G54570.1">
    <property type="protein sequence ID" value="AT1G54570.1"/>
    <property type="gene ID" value="AT1G54570"/>
</dbReference>
<dbReference type="KEGG" id="ath:AT1G54570"/>
<dbReference type="Araport" id="AT1G54570"/>
<dbReference type="TAIR" id="AT1G54570">
    <property type="gene designation" value="PES1"/>
</dbReference>
<dbReference type="eggNOG" id="ENOG502QQUD">
    <property type="taxonomic scope" value="Eukaryota"/>
</dbReference>
<dbReference type="HOGENOM" id="CLU_015395_2_1_1"/>
<dbReference type="InParanoid" id="Q9ZVN2"/>
<dbReference type="OMA" id="SMPSEFH"/>
<dbReference type="OrthoDB" id="44277at2759"/>
<dbReference type="PhylomeDB" id="Q9ZVN2"/>
<dbReference type="PRO" id="PR:Q9ZVN2"/>
<dbReference type="Proteomes" id="UP000006548">
    <property type="component" value="Chromosome 1"/>
</dbReference>
<dbReference type="ExpressionAtlas" id="Q9ZVN2">
    <property type="expression patterns" value="baseline and differential"/>
</dbReference>
<dbReference type="GO" id="GO:0009507">
    <property type="term" value="C:chloroplast"/>
    <property type="evidence" value="ECO:0000314"/>
    <property type="project" value="TAIR"/>
</dbReference>
<dbReference type="GO" id="GO:0010287">
    <property type="term" value="C:plastoglobule"/>
    <property type="evidence" value="ECO:0000314"/>
    <property type="project" value="UniProtKB"/>
</dbReference>
<dbReference type="GO" id="GO:0004144">
    <property type="term" value="F:diacylglycerol O-acyltransferase activity"/>
    <property type="evidence" value="ECO:0000314"/>
    <property type="project" value="TAIR"/>
</dbReference>
<dbReference type="GO" id="GO:0006995">
    <property type="term" value="P:cellular response to nitrogen starvation"/>
    <property type="evidence" value="ECO:0000270"/>
    <property type="project" value="UniProtKB"/>
</dbReference>
<dbReference type="GO" id="GO:0010150">
    <property type="term" value="P:leaf senescence"/>
    <property type="evidence" value="ECO:0000270"/>
    <property type="project" value="UniProtKB"/>
</dbReference>
<dbReference type="GO" id="GO:0033306">
    <property type="term" value="P:phytol metabolic process"/>
    <property type="evidence" value="ECO:0000314"/>
    <property type="project" value="TAIR"/>
</dbReference>
<dbReference type="GO" id="GO:0090693">
    <property type="term" value="P:plant organ senescence"/>
    <property type="evidence" value="ECO:0000270"/>
    <property type="project" value="UniProtKB"/>
</dbReference>
<dbReference type="GO" id="GO:1904963">
    <property type="term" value="P:regulation of phytol biosynthetic process"/>
    <property type="evidence" value="ECO:0000315"/>
    <property type="project" value="UniProtKB"/>
</dbReference>
<dbReference type="GO" id="GO:0010866">
    <property type="term" value="P:regulation of triglyceride biosynthetic process"/>
    <property type="evidence" value="ECO:0000315"/>
    <property type="project" value="UniProtKB"/>
</dbReference>
<dbReference type="GO" id="GO:0019432">
    <property type="term" value="P:triglyceride biosynthetic process"/>
    <property type="evidence" value="ECO:0000316"/>
    <property type="project" value="TAIR"/>
</dbReference>
<dbReference type="CDD" id="cd07987">
    <property type="entry name" value="LPLAT_MGAT-like"/>
    <property type="match status" value="1"/>
</dbReference>
<dbReference type="FunFam" id="3.40.50.1820:FF:000500">
    <property type="entry name" value="Esterase/lipase/thioesterase family protein"/>
    <property type="match status" value="1"/>
</dbReference>
<dbReference type="Gene3D" id="3.40.50.1820">
    <property type="entry name" value="alpha/beta hydrolase"/>
    <property type="match status" value="1"/>
</dbReference>
<dbReference type="InterPro" id="IPR029058">
    <property type="entry name" value="AB_hydrolase_fold"/>
</dbReference>
<dbReference type="InterPro" id="IPR007130">
    <property type="entry name" value="DAGAT"/>
</dbReference>
<dbReference type="PANTHER" id="PTHR22753:SF14">
    <property type="entry name" value="MONOACYLGLYCEROL_DIACYLGLYCEROL O-ACYLTRANSFERASE"/>
    <property type="match status" value="1"/>
</dbReference>
<dbReference type="PANTHER" id="PTHR22753">
    <property type="entry name" value="TRANSMEMBRANE PROTEIN 68"/>
    <property type="match status" value="1"/>
</dbReference>
<dbReference type="Pfam" id="PF03982">
    <property type="entry name" value="DAGAT"/>
    <property type="match status" value="1"/>
</dbReference>
<dbReference type="SUPFAM" id="SSF53474">
    <property type="entry name" value="alpha/beta-Hydrolases"/>
    <property type="match status" value="1"/>
</dbReference>
<proteinExistence type="evidence at protein level"/>
<organism>
    <name type="scientific">Arabidopsis thaliana</name>
    <name type="common">Mouse-ear cress</name>
    <dbReference type="NCBI Taxonomy" id="3702"/>
    <lineage>
        <taxon>Eukaryota</taxon>
        <taxon>Viridiplantae</taxon>
        <taxon>Streptophyta</taxon>
        <taxon>Embryophyta</taxon>
        <taxon>Tracheophyta</taxon>
        <taxon>Spermatophyta</taxon>
        <taxon>Magnoliopsida</taxon>
        <taxon>eudicotyledons</taxon>
        <taxon>Gunneridae</taxon>
        <taxon>Pentapetalae</taxon>
        <taxon>rosids</taxon>
        <taxon>malvids</taxon>
        <taxon>Brassicales</taxon>
        <taxon>Brassicaceae</taxon>
        <taxon>Camelineae</taxon>
        <taxon>Arabidopsis</taxon>
    </lineage>
</organism>
<accession>Q9ZVN2</accession>